<name>C_VSIVM</name>
<feature type="chain" id="PRO_0000288655" description="Protein C'">
    <location>
        <begin position="1"/>
        <end position="67"/>
    </location>
</feature>
<feature type="splice variant" id="VSP_025748" description="In isoform C." evidence="2">
    <location>
        <begin position="1"/>
        <end position="12"/>
    </location>
</feature>
<organismHost>
    <name type="scientific">Aedes</name>
    <dbReference type="NCBI Taxonomy" id="7158"/>
</organismHost>
<organismHost>
    <name type="scientific">Bos taurus</name>
    <name type="common">Bovine</name>
    <dbReference type="NCBI Taxonomy" id="9913"/>
</organismHost>
<organismHost>
    <name type="scientific">Culicoides</name>
    <dbReference type="NCBI Taxonomy" id="58271"/>
</organismHost>
<organismHost>
    <name type="scientific">Equus asinus</name>
    <name type="common">Donkey</name>
    <name type="synonym">Equus africanus asinus</name>
    <dbReference type="NCBI Taxonomy" id="9793"/>
</organismHost>
<organismHost>
    <name type="scientific">Equus caballus</name>
    <name type="common">Horse</name>
    <dbReference type="NCBI Taxonomy" id="9796"/>
</organismHost>
<organismHost>
    <name type="scientific">Homo sapiens</name>
    <name type="common">Human</name>
    <dbReference type="NCBI Taxonomy" id="9606"/>
</organismHost>
<organismHost>
    <name type="scientific">Lutzomyia</name>
    <dbReference type="NCBI Taxonomy" id="252607"/>
</organismHost>
<organismHost>
    <name type="scientific">Musca domestica</name>
    <name type="common">House fly</name>
    <dbReference type="NCBI Taxonomy" id="7370"/>
</organismHost>
<organismHost>
    <name type="scientific">Simuliidae</name>
    <name type="common">black flies</name>
    <dbReference type="NCBI Taxonomy" id="7190"/>
</organismHost>
<organismHost>
    <name type="scientific">Sus scrofa</name>
    <name type="common">Pig</name>
    <dbReference type="NCBI Taxonomy" id="9823"/>
</organismHost>
<dbReference type="EMBL" id="X04196">
    <property type="protein sequence ID" value="CAB37189.1"/>
    <property type="molecule type" value="Genomic_RNA"/>
</dbReference>
<keyword id="KW-0024">Alternative initiation</keyword>
<comment type="function">
    <text evidence="1">Seems to stimulates transcription by the viral polymerase. May play a role in viral pathogenesis or transmission by insects vectors.</text>
</comment>
<comment type="alternative products">
    <event type="alternative initiation"/>
    <isoform>
        <id>Q86132-1</id>
        <name>C'</name>
        <sequence type="displayed"/>
    </isoform>
    <isoform>
        <id>Q86132-2</id>
        <name>C</name>
        <sequence type="described" ref="VSP_025748"/>
    </isoform>
</comment>
<comment type="miscellaneous">
    <text>The P gene has two overlapping open reading frames. One encodes the P protein and the other the C'/C proteins.</text>
</comment>
<comment type="similarity">
    <text evidence="2">Belongs to the rhabdoviruses C protein family.</text>
</comment>
<gene>
    <name type="primary">P</name>
</gene>
<reference key="1">
    <citation type="journal article" date="1986" name="J. Gen. Virol.">
        <title>Cloning and expression of a viral phosphoprotein: structure suggests vesicular stomatitis virus NS may function by mimicking an RNA template.</title>
        <authorList>
            <person name="Hudson L.D."/>
            <person name="Condra C."/>
            <person name="Lazzarini R.A."/>
        </authorList>
    </citation>
    <scope>NUCLEOTIDE SEQUENCE [GENOMIC RNA]</scope>
</reference>
<sequence>MRSKHNELKSPIMSCSKRTEWKSILGPLIFRQQMILTQNLNQKLKTIKACMYQIRKLSKLKALYRGL</sequence>
<protein>
    <recommendedName>
        <fullName>Protein C'</fullName>
    </recommendedName>
</protein>
<proteinExistence type="inferred from homology"/>
<accession>Q86132</accession>
<organism>
    <name type="scientific">Vesicular stomatitis Indiana virus (strain Mudd-Summers)</name>
    <name type="common">VSIV</name>
    <dbReference type="NCBI Taxonomy" id="11279"/>
    <lineage>
        <taxon>Viruses</taxon>
        <taxon>Riboviria</taxon>
        <taxon>Orthornavirae</taxon>
        <taxon>Negarnaviricota</taxon>
        <taxon>Haploviricotina</taxon>
        <taxon>Monjiviricetes</taxon>
        <taxon>Mononegavirales</taxon>
        <taxon>Rhabdoviridae</taxon>
        <taxon>Alpharhabdovirinae</taxon>
        <taxon>Vesiculovirus</taxon>
        <taxon>Vesiculovirus indiana</taxon>
    </lineage>
</organism>
<evidence type="ECO:0000250" key="1">
    <source>
        <dbReference type="UniProtKB" id="P0C2X2"/>
    </source>
</evidence>
<evidence type="ECO:0000305" key="2"/>